<comment type="function">
    <text evidence="1">Possibly the antitoxin component of a type II toxin-antitoxin (TA) system.</text>
</comment>
<comment type="similarity">
    <text evidence="1">Belongs to the UPF0165 family.</text>
</comment>
<organism>
    <name type="scientific">Archaeoglobus fulgidus (strain ATCC 49558 / DSM 4304 / JCM 9628 / NBRC 100126 / VC-16)</name>
    <dbReference type="NCBI Taxonomy" id="224325"/>
    <lineage>
        <taxon>Archaea</taxon>
        <taxon>Methanobacteriati</taxon>
        <taxon>Methanobacteriota</taxon>
        <taxon>Archaeoglobi</taxon>
        <taxon>Archaeoglobales</taxon>
        <taxon>Archaeoglobaceae</taxon>
        <taxon>Archaeoglobus</taxon>
    </lineage>
</organism>
<name>Y1084_ARCFU</name>
<sequence length="63" mass="7619">MPKIIEAIYENGVFKPLQKVDLKEGEKIRILLKKIDVEKFIMAKLPEEKIRELERRFEDENLY</sequence>
<dbReference type="EMBL" id="AE000782">
    <property type="protein sequence ID" value="AAB90156.1"/>
    <property type="molecule type" value="Genomic_DNA"/>
</dbReference>
<dbReference type="PIR" id="C69385">
    <property type="entry name" value="C69385"/>
</dbReference>
<dbReference type="RefSeq" id="WP_010878581.1">
    <property type="nucleotide sequence ID" value="NC_000917.1"/>
</dbReference>
<dbReference type="SMR" id="O29181"/>
<dbReference type="STRING" id="224325.AF_1084"/>
<dbReference type="PaxDb" id="224325-AF_1084"/>
<dbReference type="EnsemblBacteria" id="AAB90156">
    <property type="protein sequence ID" value="AAB90156"/>
    <property type="gene ID" value="AF_1084"/>
</dbReference>
<dbReference type="GeneID" id="1484307"/>
<dbReference type="KEGG" id="afu:AF_1084"/>
<dbReference type="eggNOG" id="arCOG03880">
    <property type="taxonomic scope" value="Archaea"/>
</dbReference>
<dbReference type="HOGENOM" id="CLU_200885_3_1_2"/>
<dbReference type="OrthoDB" id="116241at2157"/>
<dbReference type="PhylomeDB" id="O29181"/>
<dbReference type="Proteomes" id="UP000002199">
    <property type="component" value="Chromosome"/>
</dbReference>
<dbReference type="Gene3D" id="4.10.1150.10">
    <property type="entry name" value="AF2212/PG0164-like"/>
    <property type="match status" value="1"/>
</dbReference>
<dbReference type="InterPro" id="IPR008203">
    <property type="entry name" value="AF2212-like"/>
</dbReference>
<dbReference type="InterPro" id="IPR024069">
    <property type="entry name" value="AF2212-like_dom_sf"/>
</dbReference>
<dbReference type="Pfam" id="PF01954">
    <property type="entry name" value="AF2212-like"/>
    <property type="match status" value="1"/>
</dbReference>
<dbReference type="SUPFAM" id="SSF141694">
    <property type="entry name" value="AF2212/PG0164-like"/>
    <property type="match status" value="1"/>
</dbReference>
<gene>
    <name type="ordered locus">AF_1084</name>
</gene>
<protein>
    <recommendedName>
        <fullName>Putative antitoxin AF_1084</fullName>
    </recommendedName>
</protein>
<accession>O29181</accession>
<proteinExistence type="inferred from homology"/>
<evidence type="ECO:0000305" key="1"/>
<feature type="chain" id="PRO_0000156851" description="Putative antitoxin AF_1084">
    <location>
        <begin position="1"/>
        <end position="63"/>
    </location>
</feature>
<keyword id="KW-1185">Reference proteome</keyword>
<keyword id="KW-1277">Toxin-antitoxin system</keyword>
<reference key="1">
    <citation type="journal article" date="1997" name="Nature">
        <title>The complete genome sequence of the hyperthermophilic, sulphate-reducing archaeon Archaeoglobus fulgidus.</title>
        <authorList>
            <person name="Klenk H.-P."/>
            <person name="Clayton R.A."/>
            <person name="Tomb J.-F."/>
            <person name="White O."/>
            <person name="Nelson K.E."/>
            <person name="Ketchum K.A."/>
            <person name="Dodson R.J."/>
            <person name="Gwinn M.L."/>
            <person name="Hickey E.K."/>
            <person name="Peterson J.D."/>
            <person name="Richardson D.L."/>
            <person name="Kerlavage A.R."/>
            <person name="Graham D.E."/>
            <person name="Kyrpides N.C."/>
            <person name="Fleischmann R.D."/>
            <person name="Quackenbush J."/>
            <person name="Lee N.H."/>
            <person name="Sutton G.G."/>
            <person name="Gill S.R."/>
            <person name="Kirkness E.F."/>
            <person name="Dougherty B.A."/>
            <person name="McKenney K."/>
            <person name="Adams M.D."/>
            <person name="Loftus B.J."/>
            <person name="Peterson S.N."/>
            <person name="Reich C.I."/>
            <person name="McNeil L.K."/>
            <person name="Badger J.H."/>
            <person name="Glodek A."/>
            <person name="Zhou L."/>
            <person name="Overbeek R."/>
            <person name="Gocayne J.D."/>
            <person name="Weidman J.F."/>
            <person name="McDonald L.A."/>
            <person name="Utterback T.R."/>
            <person name="Cotton M.D."/>
            <person name="Spriggs T."/>
            <person name="Artiach P."/>
            <person name="Kaine B.P."/>
            <person name="Sykes S.M."/>
            <person name="Sadow P.W."/>
            <person name="D'Andrea K.P."/>
            <person name="Bowman C."/>
            <person name="Fujii C."/>
            <person name="Garland S.A."/>
            <person name="Mason T.M."/>
            <person name="Olsen G.J."/>
            <person name="Fraser C.M."/>
            <person name="Smith H.O."/>
            <person name="Woese C.R."/>
            <person name="Venter J.C."/>
        </authorList>
    </citation>
    <scope>NUCLEOTIDE SEQUENCE [LARGE SCALE GENOMIC DNA]</scope>
    <source>
        <strain>ATCC 49558 / DSM 4304 / JCM 9628 / NBRC 100126 / VC-16</strain>
    </source>
</reference>